<evidence type="ECO:0000250" key="1">
    <source>
        <dbReference type="UniProtKB" id="P55851"/>
    </source>
</evidence>
<evidence type="ECO:0000250" key="2">
    <source>
        <dbReference type="UniProtKB" id="P70406"/>
    </source>
</evidence>
<evidence type="ECO:0000255" key="3"/>
<evidence type="ECO:0000255" key="4">
    <source>
        <dbReference type="PROSITE-ProRule" id="PRU00282"/>
    </source>
</evidence>
<evidence type="ECO:0000305" key="5"/>
<dbReference type="EMBL" id="AF039033">
    <property type="protein sequence ID" value="AAC98733.1"/>
    <property type="molecule type" value="mRNA"/>
</dbReference>
<dbReference type="EMBL" id="AB006613">
    <property type="protein sequence ID" value="BAA23383.1"/>
    <property type="molecule type" value="mRNA"/>
</dbReference>
<dbReference type="EMBL" id="AB010743">
    <property type="protein sequence ID" value="BAA25698.1"/>
    <property type="molecule type" value="mRNA"/>
</dbReference>
<dbReference type="EMBL" id="AB005143">
    <property type="protein sequence ID" value="BAA28832.1"/>
    <property type="molecule type" value="mRNA"/>
</dbReference>
<dbReference type="EMBL" id="BC062230">
    <property type="protein sequence ID" value="AAH62230.1"/>
    <property type="molecule type" value="mRNA"/>
</dbReference>
<dbReference type="RefSeq" id="NP_062227.2">
    <property type="nucleotide sequence ID" value="NM_019354.3"/>
</dbReference>
<dbReference type="BMRB" id="P56500"/>
<dbReference type="FunCoup" id="P56500">
    <property type="interactions" value="151"/>
</dbReference>
<dbReference type="STRING" id="10116.ENSRNOP00000024156"/>
<dbReference type="PhosphoSitePlus" id="P56500"/>
<dbReference type="PaxDb" id="10116-ENSRNOP00000024156"/>
<dbReference type="Ensembl" id="ENSRNOT00000024156.6">
    <property type="protein sequence ID" value="ENSRNOP00000024156.2"/>
    <property type="gene ID" value="ENSRNOG00000017854.6"/>
</dbReference>
<dbReference type="GeneID" id="54315"/>
<dbReference type="KEGG" id="rno:54315"/>
<dbReference type="UCSC" id="RGD:3932">
    <property type="organism name" value="rat"/>
</dbReference>
<dbReference type="AGR" id="RGD:3932"/>
<dbReference type="CTD" id="7351"/>
<dbReference type="RGD" id="3932">
    <property type="gene designation" value="Ucp2"/>
</dbReference>
<dbReference type="eggNOG" id="KOG0753">
    <property type="taxonomic scope" value="Eukaryota"/>
</dbReference>
<dbReference type="GeneTree" id="ENSGT00940000159524"/>
<dbReference type="HOGENOM" id="CLU_015166_14_2_1"/>
<dbReference type="InParanoid" id="P56500"/>
<dbReference type="OMA" id="HARRYCS"/>
<dbReference type="OrthoDB" id="28630at9989"/>
<dbReference type="PhylomeDB" id="P56500"/>
<dbReference type="TreeFam" id="TF323211"/>
<dbReference type="Reactome" id="R-RNO-167826">
    <property type="pathway name" value="The fatty acid cycling model"/>
</dbReference>
<dbReference type="PRO" id="PR:P56500"/>
<dbReference type="Proteomes" id="UP000002494">
    <property type="component" value="Chromosome 1"/>
</dbReference>
<dbReference type="Bgee" id="ENSRNOG00000017854">
    <property type="expression patterns" value="Expressed in spleen and 19 other cell types or tissues"/>
</dbReference>
<dbReference type="GO" id="GO:0005743">
    <property type="term" value="C:mitochondrial inner membrane"/>
    <property type="evidence" value="ECO:0007669"/>
    <property type="project" value="UniProtKB-SubCell"/>
</dbReference>
<dbReference type="GO" id="GO:0031966">
    <property type="term" value="C:mitochondrial membrane"/>
    <property type="evidence" value="ECO:0000266"/>
    <property type="project" value="RGD"/>
</dbReference>
<dbReference type="GO" id="GO:0015297">
    <property type="term" value="F:antiporter activity"/>
    <property type="evidence" value="ECO:0000250"/>
    <property type="project" value="UniProtKB"/>
</dbReference>
<dbReference type="GO" id="GO:0015108">
    <property type="term" value="F:chloride transmembrane transporter activity"/>
    <property type="evidence" value="ECO:0000266"/>
    <property type="project" value="RGD"/>
</dbReference>
<dbReference type="GO" id="GO:0019003">
    <property type="term" value="F:GDP binding"/>
    <property type="evidence" value="ECO:0000266"/>
    <property type="project" value="RGD"/>
</dbReference>
<dbReference type="GO" id="GO:0015183">
    <property type="term" value="F:L-aspartate transmembrane transporter activity"/>
    <property type="evidence" value="ECO:0000250"/>
    <property type="project" value="UniProtKB"/>
</dbReference>
<dbReference type="GO" id="GO:0015140">
    <property type="term" value="F:malate transmembrane transporter activity"/>
    <property type="evidence" value="ECO:0000250"/>
    <property type="project" value="UniProtKB"/>
</dbReference>
<dbReference type="GO" id="GO:0015131">
    <property type="term" value="F:oxaloacetate transmembrane transporter activity"/>
    <property type="evidence" value="ECO:0000250"/>
    <property type="project" value="UniProtKB"/>
</dbReference>
<dbReference type="GO" id="GO:0017077">
    <property type="term" value="F:oxidative phosphorylation uncoupler activity"/>
    <property type="evidence" value="ECO:0000318"/>
    <property type="project" value="GO_Central"/>
</dbReference>
<dbReference type="GO" id="GO:0140787">
    <property type="term" value="F:phosphate ion uniporter activity"/>
    <property type="evidence" value="ECO:0000250"/>
    <property type="project" value="UniProtKB"/>
</dbReference>
<dbReference type="GO" id="GO:0042803">
    <property type="term" value="F:protein homodimerization activity"/>
    <property type="evidence" value="ECO:0000250"/>
    <property type="project" value="UniProtKB"/>
</dbReference>
<dbReference type="GO" id="GO:0015078">
    <property type="term" value="F:proton transmembrane transporter activity"/>
    <property type="evidence" value="ECO:0000250"/>
    <property type="project" value="UniProtKB"/>
</dbReference>
<dbReference type="GO" id="GO:0008271">
    <property type="term" value="F:secondary active sulfate transmembrane transporter activity"/>
    <property type="evidence" value="ECO:0000250"/>
    <property type="project" value="UniProtKB"/>
</dbReference>
<dbReference type="GO" id="GO:1990845">
    <property type="term" value="P:adaptive thermogenesis"/>
    <property type="evidence" value="ECO:0000318"/>
    <property type="project" value="GO_Central"/>
</dbReference>
<dbReference type="GO" id="GO:0015740">
    <property type="term" value="P:C4-dicarboxylate transport"/>
    <property type="evidence" value="ECO:0000250"/>
    <property type="project" value="UniProtKB"/>
</dbReference>
<dbReference type="GO" id="GO:0034198">
    <property type="term" value="P:cellular response to amino acid starvation"/>
    <property type="evidence" value="ECO:0000270"/>
    <property type="project" value="RGD"/>
</dbReference>
<dbReference type="GO" id="GO:0071333">
    <property type="term" value="P:cellular response to glucose stimulus"/>
    <property type="evidence" value="ECO:0000270"/>
    <property type="project" value="RGD"/>
</dbReference>
<dbReference type="GO" id="GO:0032870">
    <property type="term" value="P:cellular response to hormone stimulus"/>
    <property type="evidence" value="ECO:0000270"/>
    <property type="project" value="RGD"/>
</dbReference>
<dbReference type="GO" id="GO:0032869">
    <property type="term" value="P:cellular response to insulin stimulus"/>
    <property type="evidence" value="ECO:0000270"/>
    <property type="project" value="RGD"/>
</dbReference>
<dbReference type="GO" id="GO:0071284">
    <property type="term" value="P:cellular response to lead ion"/>
    <property type="evidence" value="ECO:0000270"/>
    <property type="project" value="RGD"/>
</dbReference>
<dbReference type="GO" id="GO:0006541">
    <property type="term" value="P:glutamine metabolic process"/>
    <property type="evidence" value="ECO:0000250"/>
    <property type="project" value="UniProtKB"/>
</dbReference>
<dbReference type="GO" id="GO:0006096">
    <property type="term" value="P:glycolytic process"/>
    <property type="evidence" value="ECO:0000250"/>
    <property type="project" value="UniProtKB"/>
</dbReference>
<dbReference type="GO" id="GO:0097421">
    <property type="term" value="P:liver regeneration"/>
    <property type="evidence" value="ECO:0000270"/>
    <property type="project" value="RGD"/>
</dbReference>
<dbReference type="GO" id="GO:0015909">
    <property type="term" value="P:long-chain fatty acid transport"/>
    <property type="evidence" value="ECO:0000266"/>
    <property type="project" value="RGD"/>
</dbReference>
<dbReference type="GO" id="GO:0030225">
    <property type="term" value="P:macrophage differentiation"/>
    <property type="evidence" value="ECO:0000250"/>
    <property type="project" value="UniProtKB"/>
</dbReference>
<dbReference type="GO" id="GO:0000266">
    <property type="term" value="P:mitochondrial fission"/>
    <property type="evidence" value="ECO:0000250"/>
    <property type="project" value="UniProtKB"/>
</dbReference>
<dbReference type="GO" id="GO:1990542">
    <property type="term" value="P:mitochondrial transmembrane transport"/>
    <property type="evidence" value="ECO:0000250"/>
    <property type="project" value="UniProtKB"/>
</dbReference>
<dbReference type="GO" id="GO:0006839">
    <property type="term" value="P:mitochondrial transport"/>
    <property type="evidence" value="ECO:0000314"/>
    <property type="project" value="RGD"/>
</dbReference>
<dbReference type="GO" id="GO:0043066">
    <property type="term" value="P:negative regulation of apoptotic process"/>
    <property type="evidence" value="ECO:0000315"/>
    <property type="project" value="RGD"/>
</dbReference>
<dbReference type="GO" id="GO:0110099">
    <property type="term" value="P:negative regulation of calcium import into the mitochondrion"/>
    <property type="evidence" value="ECO:0000266"/>
    <property type="project" value="RGD"/>
</dbReference>
<dbReference type="GO" id="GO:0061179">
    <property type="term" value="P:negative regulation of insulin secretion involved in cellular response to glucose stimulus"/>
    <property type="evidence" value="ECO:0000315"/>
    <property type="project" value="RGD"/>
</dbReference>
<dbReference type="GO" id="GO:0043524">
    <property type="term" value="P:negative regulation of neuron apoptotic process"/>
    <property type="evidence" value="ECO:0000266"/>
    <property type="project" value="RGD"/>
</dbReference>
<dbReference type="GO" id="GO:0120162">
    <property type="term" value="P:positive regulation of cold-induced thermogenesis"/>
    <property type="evidence" value="ECO:0000250"/>
    <property type="project" value="YuBioLab"/>
</dbReference>
<dbReference type="GO" id="GO:0072593">
    <property type="term" value="P:reactive oxygen species metabolic process"/>
    <property type="evidence" value="ECO:0000250"/>
    <property type="project" value="UniProtKB"/>
</dbReference>
<dbReference type="GO" id="GO:0051881">
    <property type="term" value="P:regulation of mitochondrial membrane potential"/>
    <property type="evidence" value="ECO:0000266"/>
    <property type="project" value="RGD"/>
</dbReference>
<dbReference type="GO" id="GO:0009409">
    <property type="term" value="P:response to cold"/>
    <property type="evidence" value="ECO:0000318"/>
    <property type="project" value="GO_Central"/>
</dbReference>
<dbReference type="GO" id="GO:0071548">
    <property type="term" value="P:response to dexamethasone"/>
    <property type="evidence" value="ECO:0000270"/>
    <property type="project" value="RGD"/>
</dbReference>
<dbReference type="GO" id="GO:0070542">
    <property type="term" value="P:response to fatty acid"/>
    <property type="evidence" value="ECO:0000270"/>
    <property type="project" value="RGD"/>
</dbReference>
<dbReference type="GO" id="GO:0009749">
    <property type="term" value="P:response to glucose"/>
    <property type="evidence" value="ECO:0000270"/>
    <property type="project" value="RGD"/>
</dbReference>
<dbReference type="GO" id="GO:0001666">
    <property type="term" value="P:response to hypoxia"/>
    <property type="evidence" value="ECO:0000270"/>
    <property type="project" value="RGD"/>
</dbReference>
<dbReference type="GO" id="GO:0000303">
    <property type="term" value="P:response to superoxide"/>
    <property type="evidence" value="ECO:0000314"/>
    <property type="project" value="RGD"/>
</dbReference>
<dbReference type="FunFam" id="1.50.40.10:FF:000008">
    <property type="entry name" value="Mitochondrial uncoupling protein 2"/>
    <property type="match status" value="1"/>
</dbReference>
<dbReference type="Gene3D" id="1.50.40.10">
    <property type="entry name" value="Mitochondrial carrier domain"/>
    <property type="match status" value="1"/>
</dbReference>
<dbReference type="InterPro" id="IPR002067">
    <property type="entry name" value="Mit_carrier"/>
</dbReference>
<dbReference type="InterPro" id="IPR050391">
    <property type="entry name" value="Mito_Metabolite_Transporter"/>
</dbReference>
<dbReference type="InterPro" id="IPR018108">
    <property type="entry name" value="Mitochondrial_sb/sol_carrier"/>
</dbReference>
<dbReference type="InterPro" id="IPR023395">
    <property type="entry name" value="Mt_carrier_dom_sf"/>
</dbReference>
<dbReference type="PANTHER" id="PTHR45618">
    <property type="entry name" value="MITOCHONDRIAL DICARBOXYLATE CARRIER-RELATED"/>
    <property type="match status" value="1"/>
</dbReference>
<dbReference type="Pfam" id="PF00153">
    <property type="entry name" value="Mito_carr"/>
    <property type="match status" value="3"/>
</dbReference>
<dbReference type="PRINTS" id="PR00784">
    <property type="entry name" value="MTUNCOUPLING"/>
</dbReference>
<dbReference type="SUPFAM" id="SSF103506">
    <property type="entry name" value="Mitochondrial carrier"/>
    <property type="match status" value="1"/>
</dbReference>
<dbReference type="PROSITE" id="PS50920">
    <property type="entry name" value="SOLCAR"/>
    <property type="match status" value="3"/>
</dbReference>
<proteinExistence type="evidence at transcript level"/>
<reference key="1">
    <citation type="submission" date="1997-12" db="EMBL/GenBank/DDBJ databases">
        <authorList>
            <person name="Strobel A."/>
            <person name="Strosberg A.D."/>
            <person name="Issad T."/>
        </authorList>
    </citation>
    <scope>NUCLEOTIDE SEQUENCE [MRNA]</scope>
    <source>
        <tissue>White adipose tissue</tissue>
    </source>
</reference>
<reference key="2">
    <citation type="journal article" date="1997" name="FEBS Lett.">
        <title>Cloning of rat uncoupling protein-3 and uncoupling protein-2 cDNAs: their gene expression in rats fed high-fat diet.</title>
        <authorList>
            <person name="Matsuda J."/>
            <person name="Hosoda K."/>
            <person name="Itoh H."/>
            <person name="Son C."/>
            <person name="Doi K."/>
            <person name="Tanaka T."/>
            <person name="Fukunaga Y."/>
            <person name="Inoue G."/>
            <person name="Nishimura H."/>
            <person name="Yoshimasa Y."/>
            <person name="Yamori Y."/>
            <person name="Nakao K."/>
        </authorList>
    </citation>
    <scope>NUCLEOTIDE SEQUENCE [MRNA]</scope>
    <source>
        <strain>Sprague-Dawley</strain>
        <tissue>Brown adipose tissue</tissue>
    </source>
</reference>
<reference key="3">
    <citation type="submission" date="1998-01" db="EMBL/GenBank/DDBJ databases">
        <authorList>
            <person name="Yamazaki K."/>
            <person name="Yoshitomi H."/>
            <person name="Tanaka I."/>
        </authorList>
    </citation>
    <scope>NUCLEOTIDE SEQUENCE [MRNA]</scope>
    <source>
        <strain>Sprague-Dawley</strain>
        <tissue>Spleen</tissue>
    </source>
</reference>
<reference key="4">
    <citation type="journal article" date="1998" name="Biochim. Biophys. Acta">
        <title>Molecular cloning of rat uncoupling protein 2 cDNA and its expression in genetically obese Zucker fatty (fa/fa) rats.</title>
        <authorList>
            <person name="Hidaka S."/>
            <person name="Kakuma T."/>
            <person name="Yoshimatsu H."/>
            <person name="Yasunaga S."/>
            <person name="Kurokawa M."/>
            <person name="Sakata T."/>
        </authorList>
    </citation>
    <scope>NUCLEOTIDE SEQUENCE [MRNA]</scope>
    <source>
        <strain>Wistar</strain>
        <tissue>Brain</tissue>
    </source>
</reference>
<reference key="5">
    <citation type="journal article" date="2004" name="Genome Res.">
        <title>The status, quality, and expansion of the NIH full-length cDNA project: the Mammalian Gene Collection (MGC).</title>
        <authorList>
            <consortium name="The MGC Project Team"/>
        </authorList>
    </citation>
    <scope>NUCLEOTIDE SEQUENCE [LARGE SCALE MRNA]</scope>
    <source>
        <tissue>Pituitary</tissue>
    </source>
</reference>
<protein>
    <recommendedName>
        <fullName evidence="1">Dicarboxylate carrier UCP2</fullName>
    </recommendedName>
    <alternativeName>
        <fullName>Mitochondrial uncoupling protein 2</fullName>
        <shortName>UCP 2</shortName>
    </alternativeName>
    <alternativeName>
        <fullName>Solute carrier family 25 member 8</fullName>
    </alternativeName>
</protein>
<sequence>MVGFKATDVPPTATVKFLGAGTAACIADLITFPLDTAKVRLQIQGESQGLARTAASAQYRGVLGTILTMVRTEGPRSLYNGLVAGLQRQMSFASVRIGLYDSVKQFYTKGSEHAGIGSRLLAGSTTGALAVAVAQPTDVVKVRFQAQARAGGGRRYQSTVEAYKTIAREEGIRGLWKGTSPNVARNAIVNCTELVTYDLIKDTLLKANLMTDDLPCHFTSAFGAGFCTTVIASPVDVVKTRYMNSALGQYHSAGHCALTMLRKEGPRAFYKGFMPSFLRLGSWNVVMFVTYEQLKRALMAAYESREAPF</sequence>
<name>UCP2_RAT</name>
<comment type="function">
    <text evidence="1 2">Antiporter that exports dicarboxylate intermediates of the Krebs cycle in exchange for phosphate plus a proton across the inner membrane of mitochondria, a process driven by mitochondrial motive force with an overall impact on glycolysis, glutaminolysis and glutathione-dependent redox balance. Continuous export of oxaloacetate and related four-carbon dicarboxylates from mitochondrial matrix into the cytosol negatively regulates the oxidation of acetyl-CoA substrates via the Krebs cycle lowering the ATP/ADP ratio and reactive oxygen species (ROS) production (By similarity). May mediate inducible proton entry into the mitochondrial matrix affecting ATP turnover as a protection mechanism against oxidative stress. The proton currents are most likely associated with fatty acid flipping across the inner membrane of mitochondria in a metabolic process regulated by free fatty acids and purine nucleotides (By similarity). Regulates the use of glucose as a source of energy. Required for glucose-induced DRP1-dependent mitochondrial fission and neuron activation in the ventromedial nucleus of the hypothalamus (VMH). This mitochondrial adaptation mechanism modulates the VMH pool of glucose-excited neurons with an impact on systemic glucose homeostasis. Regulates ROS levels and metabolic reprogramming of macrophages during the resolution phase of inflammation. Attenuates ROS production in response to IL33 to preserve the integrity of the Krebs cycle required for persistent production of itaconate and subsequent GATA3-dependent differentiation of inflammation-resolving alternatively activated macrophages (By similarity). Can unidirectionally transport anions including L-malate, L-aspartate, phosphate and chloride ions (By similarity). Does not mediate adaptive thermogenesis (By similarity).</text>
</comment>
<comment type="catalytic activity">
    <reaction evidence="1">
        <text>L-aspartate(out) + phosphate(in) + H(+)(in) = L-aspartate(in) + phosphate(out) + H(+)(out)</text>
        <dbReference type="Rhea" id="RHEA:73307"/>
        <dbReference type="ChEBI" id="CHEBI:15378"/>
        <dbReference type="ChEBI" id="CHEBI:29991"/>
        <dbReference type="ChEBI" id="CHEBI:43474"/>
    </reaction>
</comment>
<comment type="catalytic activity">
    <reaction evidence="1">
        <text>oxaloacetate(out) + phosphate(in) + H(+)(in) = oxaloacetate(in) + phosphate(out) + H(+)(out)</text>
        <dbReference type="Rhea" id="RHEA:73303"/>
        <dbReference type="ChEBI" id="CHEBI:15378"/>
        <dbReference type="ChEBI" id="CHEBI:16452"/>
        <dbReference type="ChEBI" id="CHEBI:43474"/>
    </reaction>
</comment>
<comment type="catalytic activity">
    <reaction evidence="1">
        <text>(S)-malate(out) + phosphate(in) + H(+)(in) = (S)-malate(in) + phosphate(out) + H(+)(out)</text>
        <dbReference type="Rhea" id="RHEA:73299"/>
        <dbReference type="ChEBI" id="CHEBI:15378"/>
        <dbReference type="ChEBI" id="CHEBI:15589"/>
        <dbReference type="ChEBI" id="CHEBI:43474"/>
    </reaction>
</comment>
<comment type="catalytic activity">
    <reaction evidence="1">
        <text>malonate(out) + phosphate(in) + H(+)(in) = malonate(in) + phosphate(out) + H(+)(out)</text>
        <dbReference type="Rhea" id="RHEA:73387"/>
        <dbReference type="ChEBI" id="CHEBI:15378"/>
        <dbReference type="ChEBI" id="CHEBI:15792"/>
        <dbReference type="ChEBI" id="CHEBI:43474"/>
    </reaction>
</comment>
<comment type="catalytic activity">
    <reaction evidence="1">
        <text>sulfate(out) + phosphate(in) + H(+)(in) = sulfate(in) + phosphate(out) + H(+)(out)</text>
        <dbReference type="Rhea" id="RHEA:73391"/>
        <dbReference type="ChEBI" id="CHEBI:15378"/>
        <dbReference type="ChEBI" id="CHEBI:16189"/>
        <dbReference type="ChEBI" id="CHEBI:43474"/>
    </reaction>
</comment>
<comment type="catalytic activity">
    <reaction evidence="1">
        <text>(S)-malate(out) = (S)-malate(in)</text>
        <dbReference type="Rhea" id="RHEA:74555"/>
        <dbReference type="ChEBI" id="CHEBI:15589"/>
    </reaction>
</comment>
<comment type="catalytic activity">
    <reaction evidence="1">
        <text>L-aspartate(out) = L-aspartate(in)</text>
        <dbReference type="Rhea" id="RHEA:66332"/>
        <dbReference type="ChEBI" id="CHEBI:29991"/>
    </reaction>
</comment>
<comment type="catalytic activity">
    <reaction evidence="1">
        <text>phosphate(in) = phosphate(out)</text>
        <dbReference type="Rhea" id="RHEA:32823"/>
        <dbReference type="ChEBI" id="CHEBI:43474"/>
    </reaction>
</comment>
<comment type="catalytic activity">
    <reaction evidence="1">
        <text>chloride(in) = chloride(out)</text>
        <dbReference type="Rhea" id="RHEA:29823"/>
        <dbReference type="ChEBI" id="CHEBI:17996"/>
    </reaction>
</comment>
<comment type="catalytic activity">
    <reaction evidence="1 2">
        <text>H(+)(in) = H(+)(out)</text>
        <dbReference type="Rhea" id="RHEA:34979"/>
        <dbReference type="ChEBI" id="CHEBI:15378"/>
    </reaction>
</comment>
<comment type="catalytic activity">
    <reaction evidence="2">
        <text>a long-chain fatty acid(out) = a long-chain fatty acid(in)</text>
        <dbReference type="Rhea" id="RHEA:39283"/>
        <dbReference type="ChEBI" id="CHEBI:57560"/>
    </reaction>
</comment>
<comment type="subunit">
    <text evidence="1">Homotetramer. Adopts an asymmetrical dimer of dimers functional form. Interacts with MICU1 (when methylated); leading to decrease the calcium sensitivity of MICU1.</text>
</comment>
<comment type="subcellular location">
    <subcellularLocation>
        <location evidence="2">Mitochondrion inner membrane</location>
        <topology evidence="3">Multi-pass membrane protein</topology>
    </subcellularLocation>
</comment>
<comment type="tissue specificity">
    <text>Expressed in a variety of organs, with predominant expression in the heart, lung and spleen.</text>
</comment>
<comment type="domain">
    <text evidence="2">The GDP-binding domain is located within the hydrophilic cavity, with GDP phosphates likely forming salt bridges with the charged residues, Lys-141 and Arg-185.</text>
</comment>
<comment type="domain">
    <text evidence="2">The long-chain fatty acid-binding domain consists of an hydrophobic groove between peripheral transmembrane helices 1 and 6 near the matrix side.</text>
</comment>
<comment type="similarity">
    <text evidence="5">Belongs to the mitochondrial carrier (TC 2.A.29) family.</text>
</comment>
<comment type="caution">
    <text evidence="1 2">The role of UCP2/SLC25A8 in mitochondrial proton conductance is a matter of debate. It was initially suggested that it mediates proton leak that increases net proton conductance in response to ROS such as reactive alkenals generated during fatty acid oxidation in mitochondria. By lowering the proton motive force, it would provide for feedback control of mitochondrial ROS metabolism limiting extensive ROS production and protecting cells against oxidative stress. This activity and its potential regulation by ubiquinones and nucleotides was disputed by later studies, which failed to reproduce the effect on proton conductance under physiological conditions. Rather than 'uncoupling' the link between electron transfer and ATP synthesis, it may couple metabolite transport to proton flux to allow for optimal ATP turnover.</text>
</comment>
<feature type="chain" id="PRO_0000090667" description="Dicarboxylate carrier UCP2">
    <location>
        <begin position="1"/>
        <end position="309"/>
    </location>
</feature>
<feature type="topological domain" description="Mitochondrial intermembrane" evidence="5">
    <location>
        <begin position="1"/>
        <end position="16"/>
    </location>
</feature>
<feature type="transmembrane region" description="Helical; Name=1" evidence="2">
    <location>
        <begin position="17"/>
        <end position="40"/>
    </location>
</feature>
<feature type="topological domain" description="Mitochondrial matrix" evidence="5">
    <location>
        <begin position="41"/>
        <end position="77"/>
    </location>
</feature>
<feature type="transmembrane region" description="Helical; Name=2" evidence="2">
    <location>
        <begin position="78"/>
        <end position="103"/>
    </location>
</feature>
<feature type="topological domain" description="Mitochondrial intermembrane" evidence="5">
    <location>
        <begin position="104"/>
        <end position="119"/>
    </location>
</feature>
<feature type="transmembrane region" description="Helical; Name=3" evidence="2">
    <location>
        <begin position="120"/>
        <end position="145"/>
    </location>
</feature>
<feature type="topological domain" description="Mitochondrial matrix" evidence="5">
    <location>
        <begin position="146"/>
        <end position="173"/>
    </location>
</feature>
<feature type="transmembrane region" description="Helical; Name=4" evidence="2">
    <location>
        <begin position="174"/>
        <end position="199"/>
    </location>
</feature>
<feature type="topological domain" description="Mitochondrial intermembrane" evidence="5">
    <location>
        <begin position="200"/>
        <end position="217"/>
    </location>
</feature>
<feature type="transmembrane region" description="Helical; Name=5" evidence="2">
    <location>
        <begin position="218"/>
        <end position="242"/>
    </location>
</feature>
<feature type="topological domain" description="Mitochondrial matrix" evidence="5">
    <location>
        <begin position="243"/>
        <end position="268"/>
    </location>
</feature>
<feature type="transmembrane region" description="Helical; Name=6" evidence="2">
    <location>
        <begin position="269"/>
        <end position="294"/>
    </location>
</feature>
<feature type="topological domain" description="Mitochondrial intermembrane" evidence="5">
    <location>
        <begin position="295"/>
        <end position="309"/>
    </location>
</feature>
<feature type="repeat" description="Solcar 1" evidence="4">
    <location>
        <begin position="11"/>
        <end position="106"/>
    </location>
</feature>
<feature type="repeat" description="Solcar 2" evidence="4">
    <location>
        <begin position="114"/>
        <end position="203"/>
    </location>
</feature>
<feature type="repeat" description="Solcar 3" evidence="4">
    <location>
        <begin position="212"/>
        <end position="297"/>
    </location>
</feature>
<feature type="region of interest" description="Important for interaction with long-chain fatty acids" evidence="2">
    <location>
        <begin position="16"/>
        <end position="63"/>
    </location>
</feature>
<feature type="region of interest" description="Important for interaction with long-chain fatty acids" evidence="2">
    <location>
        <begin position="278"/>
        <end position="285"/>
    </location>
</feature>
<feature type="site" description="Important for inhibition by GDP" evidence="2">
    <location>
        <position position="141"/>
    </location>
</feature>
<feature type="site" description="Important for inhibition by GDP" evidence="2">
    <location>
        <position position="185"/>
    </location>
</feature>
<feature type="sequence conflict" description="In Ref. 4; BAA28832." evidence="5" ref="4">
    <original>V</original>
    <variation>L</variation>
    <location>
        <position position="9"/>
    </location>
</feature>
<feature type="sequence conflict" description="In Ref. 3; BAA25698 and 5; AAH62230." evidence="5" ref="3 5">
    <original>A</original>
    <variation>T</variation>
    <location>
        <position position="268"/>
    </location>
</feature>
<gene>
    <name type="primary">Ucp2</name>
    <name type="synonym">Slc25a8</name>
</gene>
<organism>
    <name type="scientific">Rattus norvegicus</name>
    <name type="common">Rat</name>
    <dbReference type="NCBI Taxonomy" id="10116"/>
    <lineage>
        <taxon>Eukaryota</taxon>
        <taxon>Metazoa</taxon>
        <taxon>Chordata</taxon>
        <taxon>Craniata</taxon>
        <taxon>Vertebrata</taxon>
        <taxon>Euteleostomi</taxon>
        <taxon>Mammalia</taxon>
        <taxon>Eutheria</taxon>
        <taxon>Euarchontoglires</taxon>
        <taxon>Glires</taxon>
        <taxon>Rodentia</taxon>
        <taxon>Myomorpha</taxon>
        <taxon>Muroidea</taxon>
        <taxon>Muridae</taxon>
        <taxon>Murinae</taxon>
        <taxon>Rattus</taxon>
    </lineage>
</organism>
<keyword id="KW-0472">Membrane</keyword>
<keyword id="KW-0496">Mitochondrion</keyword>
<keyword id="KW-0999">Mitochondrion inner membrane</keyword>
<keyword id="KW-1185">Reference proteome</keyword>
<keyword id="KW-0677">Repeat</keyword>
<keyword id="KW-0812">Transmembrane</keyword>
<keyword id="KW-1133">Transmembrane helix</keyword>
<keyword id="KW-0813">Transport</keyword>
<accession>P56500</accession>
<accession>O70178</accession>
<accession>O88183</accession>
<accession>Q6GST1</accession>